<organism>
    <name type="scientific">Cupriavidus taiwanensis (strain DSM 17343 / BCRC 17206 / CCUG 44338 / CIP 107171 / LMG 19424 / R1)</name>
    <name type="common">Ralstonia taiwanensis (strain LMG 19424)</name>
    <dbReference type="NCBI Taxonomy" id="977880"/>
    <lineage>
        <taxon>Bacteria</taxon>
        <taxon>Pseudomonadati</taxon>
        <taxon>Pseudomonadota</taxon>
        <taxon>Betaproteobacteria</taxon>
        <taxon>Burkholderiales</taxon>
        <taxon>Burkholderiaceae</taxon>
        <taxon>Cupriavidus</taxon>
    </lineage>
</organism>
<accession>B3R794</accession>
<keyword id="KW-0028">Amino-acid biosynthesis</keyword>
<keyword id="KW-0963">Cytoplasm</keyword>
<keyword id="KW-0368">Histidine biosynthesis</keyword>
<keyword id="KW-0456">Lyase</keyword>
<comment type="function">
    <text evidence="1">IGPS catalyzes the conversion of PRFAR and glutamine to IGP, AICAR and glutamate. The HisF subunit catalyzes the cyclization activity that produces IGP and AICAR from PRFAR using the ammonia provided by the HisH subunit.</text>
</comment>
<comment type="catalytic activity">
    <reaction evidence="1">
        <text>5-[(5-phospho-1-deoxy-D-ribulos-1-ylimino)methylamino]-1-(5-phospho-beta-D-ribosyl)imidazole-4-carboxamide + L-glutamine = D-erythro-1-(imidazol-4-yl)glycerol 3-phosphate + 5-amino-1-(5-phospho-beta-D-ribosyl)imidazole-4-carboxamide + L-glutamate + H(+)</text>
        <dbReference type="Rhea" id="RHEA:24793"/>
        <dbReference type="ChEBI" id="CHEBI:15378"/>
        <dbReference type="ChEBI" id="CHEBI:29985"/>
        <dbReference type="ChEBI" id="CHEBI:58278"/>
        <dbReference type="ChEBI" id="CHEBI:58359"/>
        <dbReference type="ChEBI" id="CHEBI:58475"/>
        <dbReference type="ChEBI" id="CHEBI:58525"/>
        <dbReference type="EC" id="4.3.2.10"/>
    </reaction>
</comment>
<comment type="pathway">
    <text evidence="1">Amino-acid biosynthesis; L-histidine biosynthesis; L-histidine from 5-phospho-alpha-D-ribose 1-diphosphate: step 5/9.</text>
</comment>
<comment type="subunit">
    <text evidence="1">Heterodimer of HisH and HisF.</text>
</comment>
<comment type="subcellular location">
    <subcellularLocation>
        <location evidence="1">Cytoplasm</location>
    </subcellularLocation>
</comment>
<comment type="similarity">
    <text evidence="1">Belongs to the HisA/HisF family.</text>
</comment>
<sequence>MLAKRIIPCLDVTNGRVVKGVNFVELRDAGDPVEIARRYDEQGADEITFLDITATSDGRDLMLHIIEDVASQVFIPLTVGGGVRTVEDVRRLLNAGADKISVNSSAIANPQLVSDATARYGSQCIVVAIDAKRSSAPGEAPRWEVFTHGGRKATGLDAVQWAREMATRGAGEILLTSMDRDGTKSGFDLELTRAVSDAVPVPVIASGGVGGLQDLADGITRGRADAVLAASIFHYGQHTVGEAKAFMAREGIPVRI</sequence>
<evidence type="ECO:0000255" key="1">
    <source>
        <dbReference type="HAMAP-Rule" id="MF_01013"/>
    </source>
</evidence>
<protein>
    <recommendedName>
        <fullName evidence="1">Imidazole glycerol phosphate synthase subunit HisF</fullName>
        <ecNumber evidence="1">4.3.2.10</ecNumber>
    </recommendedName>
    <alternativeName>
        <fullName evidence="1">IGP synthase cyclase subunit</fullName>
    </alternativeName>
    <alternativeName>
        <fullName evidence="1">IGP synthase subunit HisF</fullName>
    </alternativeName>
    <alternativeName>
        <fullName evidence="1">ImGP synthase subunit HisF</fullName>
        <shortName evidence="1">IGPS subunit HisF</shortName>
    </alternativeName>
</protein>
<dbReference type="EC" id="4.3.2.10" evidence="1"/>
<dbReference type="EMBL" id="CU633749">
    <property type="protein sequence ID" value="CAQ70794.1"/>
    <property type="molecule type" value="Genomic_DNA"/>
</dbReference>
<dbReference type="RefSeq" id="WP_012354086.1">
    <property type="nucleotide sequence ID" value="NC_010528.1"/>
</dbReference>
<dbReference type="SMR" id="B3R794"/>
<dbReference type="GeneID" id="29760793"/>
<dbReference type="KEGG" id="cti:RALTA_A2869"/>
<dbReference type="eggNOG" id="COG0107">
    <property type="taxonomic scope" value="Bacteria"/>
</dbReference>
<dbReference type="HOGENOM" id="CLU_048577_4_0_4"/>
<dbReference type="BioCyc" id="CTAI977880:RALTA_RS13980-MONOMER"/>
<dbReference type="UniPathway" id="UPA00031">
    <property type="reaction ID" value="UER00010"/>
</dbReference>
<dbReference type="Proteomes" id="UP000001692">
    <property type="component" value="Chromosome 1"/>
</dbReference>
<dbReference type="GO" id="GO:0005737">
    <property type="term" value="C:cytoplasm"/>
    <property type="evidence" value="ECO:0007669"/>
    <property type="project" value="UniProtKB-SubCell"/>
</dbReference>
<dbReference type="GO" id="GO:0000107">
    <property type="term" value="F:imidazoleglycerol-phosphate synthase activity"/>
    <property type="evidence" value="ECO:0007669"/>
    <property type="project" value="UniProtKB-UniRule"/>
</dbReference>
<dbReference type="GO" id="GO:0016829">
    <property type="term" value="F:lyase activity"/>
    <property type="evidence" value="ECO:0007669"/>
    <property type="project" value="UniProtKB-KW"/>
</dbReference>
<dbReference type="GO" id="GO:0000105">
    <property type="term" value="P:L-histidine biosynthetic process"/>
    <property type="evidence" value="ECO:0007669"/>
    <property type="project" value="UniProtKB-UniRule"/>
</dbReference>
<dbReference type="CDD" id="cd04731">
    <property type="entry name" value="HisF"/>
    <property type="match status" value="1"/>
</dbReference>
<dbReference type="FunFam" id="3.20.20.70:FF:000006">
    <property type="entry name" value="Imidazole glycerol phosphate synthase subunit HisF"/>
    <property type="match status" value="1"/>
</dbReference>
<dbReference type="Gene3D" id="3.20.20.70">
    <property type="entry name" value="Aldolase class I"/>
    <property type="match status" value="1"/>
</dbReference>
<dbReference type="HAMAP" id="MF_01013">
    <property type="entry name" value="HisF"/>
    <property type="match status" value="1"/>
</dbReference>
<dbReference type="InterPro" id="IPR013785">
    <property type="entry name" value="Aldolase_TIM"/>
</dbReference>
<dbReference type="InterPro" id="IPR006062">
    <property type="entry name" value="His_biosynth"/>
</dbReference>
<dbReference type="InterPro" id="IPR004651">
    <property type="entry name" value="HisF"/>
</dbReference>
<dbReference type="InterPro" id="IPR050064">
    <property type="entry name" value="IGPS_HisA/HisF"/>
</dbReference>
<dbReference type="InterPro" id="IPR011060">
    <property type="entry name" value="RibuloseP-bd_barrel"/>
</dbReference>
<dbReference type="NCBIfam" id="TIGR00735">
    <property type="entry name" value="hisF"/>
    <property type="match status" value="1"/>
</dbReference>
<dbReference type="PANTHER" id="PTHR21235:SF2">
    <property type="entry name" value="IMIDAZOLE GLYCEROL PHOSPHATE SYNTHASE HISHF"/>
    <property type="match status" value="1"/>
</dbReference>
<dbReference type="PANTHER" id="PTHR21235">
    <property type="entry name" value="IMIDAZOLE GLYCEROL PHOSPHATE SYNTHASE SUBUNIT HISF/H IGP SYNTHASE SUBUNIT HISF/H"/>
    <property type="match status" value="1"/>
</dbReference>
<dbReference type="Pfam" id="PF00977">
    <property type="entry name" value="His_biosynth"/>
    <property type="match status" value="1"/>
</dbReference>
<dbReference type="SUPFAM" id="SSF51366">
    <property type="entry name" value="Ribulose-phoshate binding barrel"/>
    <property type="match status" value="1"/>
</dbReference>
<name>HIS6_CUPTR</name>
<gene>
    <name evidence="1" type="primary">hisF</name>
    <name type="ordered locus">RALTA_A2869</name>
</gene>
<reference key="1">
    <citation type="journal article" date="2008" name="Genome Res.">
        <title>Genome sequence of the beta-rhizobium Cupriavidus taiwanensis and comparative genomics of rhizobia.</title>
        <authorList>
            <person name="Amadou C."/>
            <person name="Pascal G."/>
            <person name="Mangenot S."/>
            <person name="Glew M."/>
            <person name="Bontemps C."/>
            <person name="Capela D."/>
            <person name="Carrere S."/>
            <person name="Cruveiller S."/>
            <person name="Dossat C."/>
            <person name="Lajus A."/>
            <person name="Marchetti M."/>
            <person name="Poinsot V."/>
            <person name="Rouy Z."/>
            <person name="Servin B."/>
            <person name="Saad M."/>
            <person name="Schenowitz C."/>
            <person name="Barbe V."/>
            <person name="Batut J."/>
            <person name="Medigue C."/>
            <person name="Masson-Boivin C."/>
        </authorList>
    </citation>
    <scope>NUCLEOTIDE SEQUENCE [LARGE SCALE GENOMIC DNA]</scope>
    <source>
        <strain>DSM 17343 / BCRC 17206 / CCUG 44338 / CIP 107171 / LMG 19424 / R1</strain>
    </source>
</reference>
<feature type="chain" id="PRO_1000134985" description="Imidazole glycerol phosphate synthase subunit HisF">
    <location>
        <begin position="1"/>
        <end position="256"/>
    </location>
</feature>
<feature type="active site" evidence="1">
    <location>
        <position position="11"/>
    </location>
</feature>
<feature type="active site" evidence="1">
    <location>
        <position position="130"/>
    </location>
</feature>
<proteinExistence type="inferred from homology"/>